<evidence type="ECO:0000255" key="1">
    <source>
        <dbReference type="HAMAP-Rule" id="MF_00689"/>
    </source>
</evidence>
<organism>
    <name type="scientific">Burkholderia thailandensis (strain ATCC 700388 / DSM 13276 / CCUG 48851 / CIP 106301 / E264)</name>
    <dbReference type="NCBI Taxonomy" id="271848"/>
    <lineage>
        <taxon>Bacteria</taxon>
        <taxon>Pseudomonadati</taxon>
        <taxon>Pseudomonadota</taxon>
        <taxon>Betaproteobacteria</taxon>
        <taxon>Burkholderiales</taxon>
        <taxon>Burkholderiaceae</taxon>
        <taxon>Burkholderia</taxon>
        <taxon>pseudomallei group</taxon>
    </lineage>
</organism>
<gene>
    <name evidence="1" type="primary">bpt</name>
    <name type="ordered locus">BTH_I2510</name>
</gene>
<sequence>MTHPTELPLSPLSALQFYATAPYPCSYLDGRIARSQVATPSHLINSDIYTELVKAGFRRSGVFTYRPYCDGCRACVPVRVPVDAFAPNRAQRRAWKRHRALVATVSPLHYDEEHYALYMRYQSARHAGGGMDRDSRDQYEQFLLQSRINSRLVEFRDLDTPKDGASALRMVSMIDILGDGLSSVYTFFDPDESHASYGTYNILWQIEQAKSLRLPYVYLGYWIRESPKMAYKANFHPLEGLVDGRWKVLDPTLVDLPPVDAALARAPLPGGHSGTR</sequence>
<feature type="chain" id="PRO_0000263179" description="Aspartate/glutamate leucyltransferase">
    <location>
        <begin position="1"/>
        <end position="276"/>
    </location>
</feature>
<dbReference type="EC" id="2.3.2.29" evidence="1"/>
<dbReference type="EMBL" id="CP000086">
    <property type="protein sequence ID" value="ABC38174.1"/>
    <property type="molecule type" value="Genomic_DNA"/>
</dbReference>
<dbReference type="RefSeq" id="WP_009891394.1">
    <property type="nucleotide sequence ID" value="NZ_CP008785.1"/>
</dbReference>
<dbReference type="SMR" id="Q2SVM0"/>
<dbReference type="GeneID" id="45122220"/>
<dbReference type="KEGG" id="bte:BTH_I2510"/>
<dbReference type="HOGENOM" id="CLU_077607_0_0_4"/>
<dbReference type="Proteomes" id="UP000001930">
    <property type="component" value="Chromosome I"/>
</dbReference>
<dbReference type="GO" id="GO:0005737">
    <property type="term" value="C:cytoplasm"/>
    <property type="evidence" value="ECO:0007669"/>
    <property type="project" value="UniProtKB-SubCell"/>
</dbReference>
<dbReference type="GO" id="GO:0004057">
    <property type="term" value="F:arginyl-tRNA--protein transferase activity"/>
    <property type="evidence" value="ECO:0007669"/>
    <property type="project" value="InterPro"/>
</dbReference>
<dbReference type="GO" id="GO:0008914">
    <property type="term" value="F:leucyl-tRNA--protein transferase activity"/>
    <property type="evidence" value="ECO:0007669"/>
    <property type="project" value="UniProtKB-UniRule"/>
</dbReference>
<dbReference type="GO" id="GO:0071596">
    <property type="term" value="P:ubiquitin-dependent protein catabolic process via the N-end rule pathway"/>
    <property type="evidence" value="ECO:0007669"/>
    <property type="project" value="InterPro"/>
</dbReference>
<dbReference type="HAMAP" id="MF_00689">
    <property type="entry name" value="Bpt"/>
    <property type="match status" value="1"/>
</dbReference>
<dbReference type="InterPro" id="IPR016181">
    <property type="entry name" value="Acyl_CoA_acyltransferase"/>
</dbReference>
<dbReference type="InterPro" id="IPR017138">
    <property type="entry name" value="Asp_Glu_LeuTrfase"/>
</dbReference>
<dbReference type="InterPro" id="IPR030700">
    <property type="entry name" value="N-end_Aminoacyl_Trfase"/>
</dbReference>
<dbReference type="InterPro" id="IPR007472">
    <property type="entry name" value="N-end_Aminoacyl_Trfase_C"/>
</dbReference>
<dbReference type="InterPro" id="IPR007471">
    <property type="entry name" value="N-end_Aminoacyl_Trfase_N"/>
</dbReference>
<dbReference type="NCBIfam" id="NF002341">
    <property type="entry name" value="PRK01305.1-1"/>
    <property type="match status" value="1"/>
</dbReference>
<dbReference type="NCBIfam" id="NF002342">
    <property type="entry name" value="PRK01305.1-3"/>
    <property type="match status" value="1"/>
</dbReference>
<dbReference type="NCBIfam" id="NF002346">
    <property type="entry name" value="PRK01305.2-3"/>
    <property type="match status" value="1"/>
</dbReference>
<dbReference type="PANTHER" id="PTHR21367">
    <property type="entry name" value="ARGININE-TRNA-PROTEIN TRANSFERASE 1"/>
    <property type="match status" value="1"/>
</dbReference>
<dbReference type="PANTHER" id="PTHR21367:SF1">
    <property type="entry name" value="ARGINYL-TRNA--PROTEIN TRANSFERASE 1"/>
    <property type="match status" value="1"/>
</dbReference>
<dbReference type="Pfam" id="PF04377">
    <property type="entry name" value="ATE_C"/>
    <property type="match status" value="1"/>
</dbReference>
<dbReference type="Pfam" id="PF04376">
    <property type="entry name" value="ATE_N"/>
    <property type="match status" value="1"/>
</dbReference>
<dbReference type="PIRSF" id="PIRSF037208">
    <property type="entry name" value="ATE_pro_prd"/>
    <property type="match status" value="1"/>
</dbReference>
<dbReference type="SUPFAM" id="SSF55729">
    <property type="entry name" value="Acyl-CoA N-acyltransferases (Nat)"/>
    <property type="match status" value="1"/>
</dbReference>
<comment type="function">
    <text evidence="1">Functions in the N-end rule pathway of protein degradation where it conjugates Leu from its aminoacyl-tRNA to the N-termini of proteins containing an N-terminal aspartate or glutamate.</text>
</comment>
<comment type="catalytic activity">
    <reaction evidence="1">
        <text>N-terminal L-glutamyl-[protein] + L-leucyl-tRNA(Leu) = N-terminal L-leucyl-L-glutamyl-[protein] + tRNA(Leu) + H(+)</text>
        <dbReference type="Rhea" id="RHEA:50412"/>
        <dbReference type="Rhea" id="RHEA-COMP:9613"/>
        <dbReference type="Rhea" id="RHEA-COMP:9622"/>
        <dbReference type="Rhea" id="RHEA-COMP:12664"/>
        <dbReference type="Rhea" id="RHEA-COMP:12668"/>
        <dbReference type="ChEBI" id="CHEBI:15378"/>
        <dbReference type="ChEBI" id="CHEBI:64721"/>
        <dbReference type="ChEBI" id="CHEBI:78442"/>
        <dbReference type="ChEBI" id="CHEBI:78494"/>
        <dbReference type="ChEBI" id="CHEBI:133041"/>
        <dbReference type="EC" id="2.3.2.29"/>
    </reaction>
</comment>
<comment type="catalytic activity">
    <reaction evidence="1">
        <text>N-terminal L-aspartyl-[protein] + L-leucyl-tRNA(Leu) = N-terminal L-leucyl-L-aspartyl-[protein] + tRNA(Leu) + H(+)</text>
        <dbReference type="Rhea" id="RHEA:50420"/>
        <dbReference type="Rhea" id="RHEA-COMP:9613"/>
        <dbReference type="Rhea" id="RHEA-COMP:9622"/>
        <dbReference type="Rhea" id="RHEA-COMP:12669"/>
        <dbReference type="Rhea" id="RHEA-COMP:12674"/>
        <dbReference type="ChEBI" id="CHEBI:15378"/>
        <dbReference type="ChEBI" id="CHEBI:64720"/>
        <dbReference type="ChEBI" id="CHEBI:78442"/>
        <dbReference type="ChEBI" id="CHEBI:78494"/>
        <dbReference type="ChEBI" id="CHEBI:133042"/>
        <dbReference type="EC" id="2.3.2.29"/>
    </reaction>
</comment>
<comment type="subcellular location">
    <subcellularLocation>
        <location evidence="1">Cytoplasm</location>
    </subcellularLocation>
</comment>
<comment type="similarity">
    <text evidence="1">Belongs to the R-transferase family. Bpt subfamily.</text>
</comment>
<proteinExistence type="inferred from homology"/>
<reference key="1">
    <citation type="journal article" date="2005" name="BMC Genomics">
        <title>Bacterial genome adaptation to niches: divergence of the potential virulence genes in three Burkholderia species of different survival strategies.</title>
        <authorList>
            <person name="Kim H.S."/>
            <person name="Schell M.A."/>
            <person name="Yu Y."/>
            <person name="Ulrich R.L."/>
            <person name="Sarria S.H."/>
            <person name="Nierman W.C."/>
            <person name="DeShazer D."/>
        </authorList>
    </citation>
    <scope>NUCLEOTIDE SEQUENCE [LARGE SCALE GENOMIC DNA]</scope>
    <source>
        <strain>ATCC 700388 / DSM 13276 / CCUG 48851 / CIP 106301 / E264</strain>
    </source>
</reference>
<keyword id="KW-0012">Acyltransferase</keyword>
<keyword id="KW-0963">Cytoplasm</keyword>
<keyword id="KW-0808">Transferase</keyword>
<name>BPT_BURTA</name>
<accession>Q2SVM0</accession>
<protein>
    <recommendedName>
        <fullName evidence="1">Aspartate/glutamate leucyltransferase</fullName>
        <ecNumber evidence="1">2.3.2.29</ecNumber>
    </recommendedName>
</protein>